<evidence type="ECO:0000255" key="1">
    <source>
        <dbReference type="HAMAP-Rule" id="MF_00197"/>
    </source>
</evidence>
<reference key="1">
    <citation type="journal article" date="2009" name="Nat. Genet.">
        <title>Comparative genomic and phylogeographic analysis of Mycobacterium leprae.</title>
        <authorList>
            <person name="Monot M."/>
            <person name="Honore N."/>
            <person name="Garnier T."/>
            <person name="Zidane N."/>
            <person name="Sherafi D."/>
            <person name="Paniz-Mondolfi A."/>
            <person name="Matsuoka M."/>
            <person name="Taylor G.M."/>
            <person name="Donoghue H.D."/>
            <person name="Bouwman A."/>
            <person name="Mays S."/>
            <person name="Watson C."/>
            <person name="Lockwood D."/>
            <person name="Khamispour A."/>
            <person name="Dowlati Y."/>
            <person name="Jianping S."/>
            <person name="Rea T.H."/>
            <person name="Vera-Cabrera L."/>
            <person name="Stefani M.M."/>
            <person name="Banu S."/>
            <person name="Macdonald M."/>
            <person name="Sapkota B.R."/>
            <person name="Spencer J.S."/>
            <person name="Thomas J."/>
            <person name="Harshman K."/>
            <person name="Singh P."/>
            <person name="Busso P."/>
            <person name="Gattiker A."/>
            <person name="Rougemont J."/>
            <person name="Brennan P.J."/>
            <person name="Cole S.T."/>
        </authorList>
    </citation>
    <scope>NUCLEOTIDE SEQUENCE [LARGE SCALE GENOMIC DNA]</scope>
    <source>
        <strain>Br4923</strain>
    </source>
</reference>
<name>DAPF_MYCLB</name>
<protein>
    <recommendedName>
        <fullName evidence="1">Diaminopimelate epimerase</fullName>
        <shortName evidence="1">DAP epimerase</shortName>
        <ecNumber evidence="1">5.1.1.7</ecNumber>
    </recommendedName>
    <alternativeName>
        <fullName evidence="1">PLP-independent amino acid racemase</fullName>
    </alternativeName>
</protein>
<accession>B8ZQU1</accession>
<sequence length="296" mass="30640">MIFAKGHGTQNDFVVLPDVEADVTFTAAQVAALCNRRQGLGADGVLRVTTAGAAVTAGVLEHLPDGVSCSDWYMDYRNADGSVAQMCGNGVRVFAHYLRASGLESCDEFVVGSLAGPRLVNVHHVDELNADVTVDMGKANLLGSGGPAFAVTVGGRRFSGVAVDVGNPHLACMDPQLSLEELAALDLGAPVHLDRVQFPDGVNIEVLTAPVDGMVQMRVHERGVGETRSCGTGTVAAAVAALASAGADTGTLTVRVPGGDVVITITDVTSYLRGPSVLVAHGELADAWWYSLARSC</sequence>
<dbReference type="EC" id="5.1.1.7" evidence="1"/>
<dbReference type="EMBL" id="FM211192">
    <property type="protein sequence ID" value="CAR71091.1"/>
    <property type="molecule type" value="Genomic_DNA"/>
</dbReference>
<dbReference type="SMR" id="B8ZQU1"/>
<dbReference type="KEGG" id="mlb:MLBr00996"/>
<dbReference type="HOGENOM" id="CLU_053306_4_0_11"/>
<dbReference type="UniPathway" id="UPA00034">
    <property type="reaction ID" value="UER00025"/>
</dbReference>
<dbReference type="Proteomes" id="UP000006900">
    <property type="component" value="Chromosome"/>
</dbReference>
<dbReference type="GO" id="GO:0005829">
    <property type="term" value="C:cytosol"/>
    <property type="evidence" value="ECO:0007669"/>
    <property type="project" value="TreeGrafter"/>
</dbReference>
<dbReference type="GO" id="GO:0008837">
    <property type="term" value="F:diaminopimelate epimerase activity"/>
    <property type="evidence" value="ECO:0007669"/>
    <property type="project" value="UniProtKB-UniRule"/>
</dbReference>
<dbReference type="GO" id="GO:0009089">
    <property type="term" value="P:lysine biosynthetic process via diaminopimelate"/>
    <property type="evidence" value="ECO:0007669"/>
    <property type="project" value="UniProtKB-UniRule"/>
</dbReference>
<dbReference type="Gene3D" id="3.10.310.10">
    <property type="entry name" value="Diaminopimelate Epimerase, Chain A, domain 1"/>
    <property type="match status" value="2"/>
</dbReference>
<dbReference type="HAMAP" id="MF_00197">
    <property type="entry name" value="DAP_epimerase"/>
    <property type="match status" value="1"/>
</dbReference>
<dbReference type="InterPro" id="IPR018510">
    <property type="entry name" value="DAP_epimerase_AS"/>
</dbReference>
<dbReference type="InterPro" id="IPR001653">
    <property type="entry name" value="DAP_epimerase_DapF"/>
</dbReference>
<dbReference type="NCBIfam" id="TIGR00652">
    <property type="entry name" value="DapF"/>
    <property type="match status" value="1"/>
</dbReference>
<dbReference type="PANTHER" id="PTHR31689:SF0">
    <property type="entry name" value="DIAMINOPIMELATE EPIMERASE"/>
    <property type="match status" value="1"/>
</dbReference>
<dbReference type="PANTHER" id="PTHR31689">
    <property type="entry name" value="DIAMINOPIMELATE EPIMERASE, CHLOROPLASTIC"/>
    <property type="match status" value="1"/>
</dbReference>
<dbReference type="Pfam" id="PF01678">
    <property type="entry name" value="DAP_epimerase"/>
    <property type="match status" value="2"/>
</dbReference>
<dbReference type="SUPFAM" id="SSF54506">
    <property type="entry name" value="Diaminopimelate epimerase-like"/>
    <property type="match status" value="2"/>
</dbReference>
<dbReference type="PROSITE" id="PS01326">
    <property type="entry name" value="DAP_EPIMERASE"/>
    <property type="match status" value="1"/>
</dbReference>
<comment type="function">
    <text evidence="1">Catalyzes the stereoinversion of LL-2,6-diaminopimelate (L,L-DAP) to meso-diaminopimelate (meso-DAP), a precursor of L-lysine and an essential component of the bacterial peptidoglycan.</text>
</comment>
<comment type="catalytic activity">
    <reaction evidence="1">
        <text>(2S,6S)-2,6-diaminopimelate = meso-2,6-diaminopimelate</text>
        <dbReference type="Rhea" id="RHEA:15393"/>
        <dbReference type="ChEBI" id="CHEBI:57609"/>
        <dbReference type="ChEBI" id="CHEBI:57791"/>
        <dbReference type="EC" id="5.1.1.7"/>
    </reaction>
</comment>
<comment type="pathway">
    <text evidence="1">Amino-acid biosynthesis; L-lysine biosynthesis via DAP pathway; DL-2,6-diaminopimelate from LL-2,6-diaminopimelate: step 1/1.</text>
</comment>
<comment type="subunit">
    <text evidence="1">Homodimer.</text>
</comment>
<comment type="subcellular location">
    <subcellularLocation>
        <location evidence="1">Cytoplasm</location>
    </subcellularLocation>
</comment>
<comment type="similarity">
    <text evidence="1">Belongs to the diaminopimelate epimerase family.</text>
</comment>
<feature type="chain" id="PRO_1000124428" description="Diaminopimelate epimerase">
    <location>
        <begin position="1"/>
        <end position="296"/>
    </location>
</feature>
<feature type="active site" description="Proton donor" evidence="1">
    <location>
        <position position="87"/>
    </location>
</feature>
<feature type="active site" description="Proton acceptor" evidence="1">
    <location>
        <position position="230"/>
    </location>
</feature>
<feature type="binding site" evidence="1">
    <location>
        <position position="11"/>
    </location>
    <ligand>
        <name>substrate</name>
    </ligand>
</feature>
<feature type="binding site" evidence="1">
    <location>
        <position position="78"/>
    </location>
    <ligand>
        <name>substrate</name>
    </ligand>
</feature>
<feature type="binding site" evidence="1">
    <location>
        <begin position="88"/>
        <end position="89"/>
    </location>
    <ligand>
        <name>substrate</name>
    </ligand>
</feature>
<feature type="binding site" evidence="1">
    <location>
        <position position="167"/>
    </location>
    <ligand>
        <name>substrate</name>
    </ligand>
</feature>
<feature type="binding site" evidence="1">
    <location>
        <position position="203"/>
    </location>
    <ligand>
        <name>substrate</name>
    </ligand>
</feature>
<feature type="binding site" evidence="1">
    <location>
        <begin position="221"/>
        <end position="222"/>
    </location>
    <ligand>
        <name>substrate</name>
    </ligand>
</feature>
<feature type="binding site" evidence="1">
    <location>
        <begin position="231"/>
        <end position="232"/>
    </location>
    <ligand>
        <name>substrate</name>
    </ligand>
</feature>
<feature type="site" description="Could be important to modulate the pK values of the two catalytic cysteine residues" evidence="1">
    <location>
        <position position="169"/>
    </location>
</feature>
<feature type="site" description="Could be important to modulate the pK values of the two catalytic cysteine residues" evidence="1">
    <location>
        <position position="221"/>
    </location>
</feature>
<gene>
    <name evidence="1" type="primary">dapF</name>
    <name type="ordered locus">MLBr00996</name>
</gene>
<proteinExistence type="inferred from homology"/>
<keyword id="KW-0028">Amino-acid biosynthesis</keyword>
<keyword id="KW-0963">Cytoplasm</keyword>
<keyword id="KW-0413">Isomerase</keyword>
<keyword id="KW-0457">Lysine biosynthesis</keyword>
<organism>
    <name type="scientific">Mycobacterium leprae (strain Br4923)</name>
    <dbReference type="NCBI Taxonomy" id="561304"/>
    <lineage>
        <taxon>Bacteria</taxon>
        <taxon>Bacillati</taxon>
        <taxon>Actinomycetota</taxon>
        <taxon>Actinomycetes</taxon>
        <taxon>Mycobacteriales</taxon>
        <taxon>Mycobacteriaceae</taxon>
        <taxon>Mycobacterium</taxon>
    </lineage>
</organism>